<dbReference type="EC" id="2.1.2.10" evidence="2"/>
<dbReference type="EMBL" id="D11162">
    <property type="protein sequence ID" value="BAA01937.1"/>
    <property type="molecule type" value="mRNA"/>
</dbReference>
<dbReference type="PIR" id="A44167">
    <property type="entry name" value="A44167"/>
</dbReference>
<dbReference type="SMR" id="P28337"/>
<dbReference type="FunCoup" id="P28337">
    <property type="interactions" value="40"/>
</dbReference>
<dbReference type="PaxDb" id="9031-ENSGALP00000042238"/>
<dbReference type="VEuPathDB" id="HostDB:geneid_395566"/>
<dbReference type="eggNOG" id="KOG2770">
    <property type="taxonomic scope" value="Eukaryota"/>
</dbReference>
<dbReference type="InParanoid" id="P28337"/>
<dbReference type="OrthoDB" id="10263536at2759"/>
<dbReference type="PhylomeDB" id="P28337"/>
<dbReference type="BioCyc" id="MetaCyc:MONOMER-12927"/>
<dbReference type="BRENDA" id="1.4.1.27">
    <property type="organism ID" value="1306"/>
</dbReference>
<dbReference type="Proteomes" id="UP000000539">
    <property type="component" value="Unassembled WGS sequence"/>
</dbReference>
<dbReference type="GO" id="GO:0005960">
    <property type="term" value="C:glycine cleavage complex"/>
    <property type="evidence" value="ECO:0007669"/>
    <property type="project" value="InterPro"/>
</dbReference>
<dbReference type="GO" id="GO:0005739">
    <property type="term" value="C:mitochondrion"/>
    <property type="evidence" value="ECO:0000318"/>
    <property type="project" value="GO_Central"/>
</dbReference>
<dbReference type="GO" id="GO:0004047">
    <property type="term" value="F:aminomethyltransferase activity"/>
    <property type="evidence" value="ECO:0000314"/>
    <property type="project" value="UniProtKB"/>
</dbReference>
<dbReference type="GO" id="GO:0008483">
    <property type="term" value="F:transaminase activity"/>
    <property type="evidence" value="ECO:0007669"/>
    <property type="project" value="UniProtKB-KW"/>
</dbReference>
<dbReference type="GO" id="GO:0019464">
    <property type="term" value="P:glycine decarboxylation via glycine cleavage system"/>
    <property type="evidence" value="ECO:0000314"/>
    <property type="project" value="UniProtKB"/>
</dbReference>
<dbReference type="FunFam" id="2.40.30.110:FF:000002">
    <property type="entry name" value="Aminomethyltransferase"/>
    <property type="match status" value="1"/>
</dbReference>
<dbReference type="FunFam" id="3.30.1360.120:FF:000014">
    <property type="entry name" value="Aminomethyltransferase"/>
    <property type="match status" value="1"/>
</dbReference>
<dbReference type="FunFam" id="3.30.70.1400:FF:000001">
    <property type="entry name" value="Aminomethyltransferase"/>
    <property type="match status" value="1"/>
</dbReference>
<dbReference type="FunFam" id="4.10.1250.10:FF:000002">
    <property type="entry name" value="Aminomethyltransferase"/>
    <property type="match status" value="1"/>
</dbReference>
<dbReference type="Gene3D" id="2.40.30.110">
    <property type="entry name" value="Aminomethyltransferase beta-barrel domains"/>
    <property type="match status" value="1"/>
</dbReference>
<dbReference type="Gene3D" id="3.30.70.1400">
    <property type="entry name" value="Aminomethyltransferase beta-barrel domains"/>
    <property type="match status" value="1"/>
</dbReference>
<dbReference type="Gene3D" id="4.10.1250.10">
    <property type="entry name" value="Aminomethyltransferase fragment"/>
    <property type="match status" value="1"/>
</dbReference>
<dbReference type="Gene3D" id="3.30.1360.120">
    <property type="entry name" value="Probable tRNA modification gtpase trme, domain 1"/>
    <property type="match status" value="1"/>
</dbReference>
<dbReference type="InterPro" id="IPR006223">
    <property type="entry name" value="GCS_T"/>
</dbReference>
<dbReference type="InterPro" id="IPR013977">
    <property type="entry name" value="GCST_C"/>
</dbReference>
<dbReference type="InterPro" id="IPR006222">
    <property type="entry name" value="GCV_T_N"/>
</dbReference>
<dbReference type="InterPro" id="IPR028896">
    <property type="entry name" value="GcvT/YgfZ/DmdA"/>
</dbReference>
<dbReference type="InterPro" id="IPR029043">
    <property type="entry name" value="GcvT/YgfZ_C"/>
</dbReference>
<dbReference type="InterPro" id="IPR027266">
    <property type="entry name" value="TrmE/GcvT_dom1"/>
</dbReference>
<dbReference type="NCBIfam" id="TIGR00528">
    <property type="entry name" value="gcvT"/>
    <property type="match status" value="1"/>
</dbReference>
<dbReference type="NCBIfam" id="NF001567">
    <property type="entry name" value="PRK00389.1"/>
    <property type="match status" value="1"/>
</dbReference>
<dbReference type="PANTHER" id="PTHR43757">
    <property type="entry name" value="AMINOMETHYLTRANSFERASE"/>
    <property type="match status" value="1"/>
</dbReference>
<dbReference type="PANTHER" id="PTHR43757:SF16">
    <property type="entry name" value="AMINOMETHYLTRANSFERASE, MITOCHONDRIAL"/>
    <property type="match status" value="1"/>
</dbReference>
<dbReference type="Pfam" id="PF01571">
    <property type="entry name" value="GCV_T"/>
    <property type="match status" value="1"/>
</dbReference>
<dbReference type="Pfam" id="PF08669">
    <property type="entry name" value="GCV_T_C"/>
    <property type="match status" value="1"/>
</dbReference>
<dbReference type="PIRSF" id="PIRSF006487">
    <property type="entry name" value="GcvT"/>
    <property type="match status" value="1"/>
</dbReference>
<dbReference type="SUPFAM" id="SSF101790">
    <property type="entry name" value="Aminomethyltransferase beta-barrel domain"/>
    <property type="match status" value="1"/>
</dbReference>
<dbReference type="SUPFAM" id="SSF103025">
    <property type="entry name" value="Folate-binding domain"/>
    <property type="match status" value="1"/>
</dbReference>
<protein>
    <recommendedName>
        <fullName evidence="4">Aminomethyltransferase, mitochondrial</fullName>
        <ecNumber evidence="2">2.1.2.10</ecNumber>
    </recommendedName>
    <alternativeName>
        <fullName evidence="3">Glycine cleavage system T protein</fullName>
        <shortName>GCVT</shortName>
    </alternativeName>
</protein>
<comment type="function">
    <text evidence="2">The glycine cleavage system catalyzes the degradation of glycine.</text>
</comment>
<comment type="catalytic activity">
    <reaction evidence="2">
        <text>N(6)-[(R)-S(8)-aminomethyldihydrolipoyl]-L-lysyl-[protein] + (6S)-5,6,7,8-tetrahydrofolate = N(6)-[(R)-dihydrolipoyl]-L-lysyl-[protein] + (6R)-5,10-methylene-5,6,7,8-tetrahydrofolate + NH4(+)</text>
        <dbReference type="Rhea" id="RHEA:16945"/>
        <dbReference type="Rhea" id="RHEA-COMP:10475"/>
        <dbReference type="Rhea" id="RHEA-COMP:10492"/>
        <dbReference type="ChEBI" id="CHEBI:15636"/>
        <dbReference type="ChEBI" id="CHEBI:28938"/>
        <dbReference type="ChEBI" id="CHEBI:57453"/>
        <dbReference type="ChEBI" id="CHEBI:83100"/>
        <dbReference type="ChEBI" id="CHEBI:83143"/>
        <dbReference type="EC" id="2.1.2.10"/>
    </reaction>
</comment>
<comment type="subunit">
    <text evidence="5">The glycine cleavage system is composed of four proteins: P, T, L and H.</text>
</comment>
<comment type="subcellular location">
    <subcellularLocation>
        <location evidence="5">Mitochondrion</location>
    </subcellularLocation>
</comment>
<comment type="similarity">
    <text evidence="4">Belongs to the GcvT family.</text>
</comment>
<name>GCST_CHICK</name>
<keyword id="KW-0032">Aminotransferase</keyword>
<keyword id="KW-0496">Mitochondrion</keyword>
<keyword id="KW-1185">Reference proteome</keyword>
<keyword id="KW-0808">Transferase</keyword>
<keyword id="KW-0809">Transit peptide</keyword>
<reference key="1">
    <citation type="journal article" date="1992" name="J. Biol. Chem.">
        <title>Molecular cloning of a cDNA encoding chicken T-protein of the glycine cleavage system and expression of the functional protein in Escherichia coli. Effect of mRNA secondary structure in the translational initiation region on expression.</title>
        <authorList>
            <person name="Okamura-Ikeda K."/>
            <person name="Fujiwara K."/>
            <person name="Motokawa Y."/>
        </authorList>
    </citation>
    <scope>NUCLEOTIDE SEQUENCE [MRNA]</scope>
    <scope>TRANSIT PEPTIDE CLEAVAGE SITE</scope>
    <scope>CATALYTIC ACTIVITY</scope>
    <scope>FUNCTION</scope>
</reference>
<reference key="2">
    <citation type="journal article" date="1991" name="J. Biol. Chem.">
        <title>Isolation and sequence determination of cDNA encoding T-protein of the glycine cleavage system.</title>
        <authorList>
            <person name="Okamura-Ikeda K."/>
            <person name="Fujiwara K."/>
            <person name="Yamamoto M."/>
            <person name="Hiraga K."/>
            <person name="Motokawa Y."/>
        </authorList>
    </citation>
    <scope>NUCLEOTIDE SEQUENCE [MRNA] OF 179-392</scope>
    <source>
        <tissue>Liver</tissue>
    </source>
</reference>
<gene>
    <name evidence="1" type="primary">AMT</name>
</gene>
<feature type="transit peptide" description="Mitochondrion" evidence="2">
    <location>
        <begin position="1"/>
        <end position="16"/>
    </location>
</feature>
<feature type="chain" id="PRO_0000010757" description="Aminomethyltransferase, mitochondrial">
    <location>
        <begin position="17"/>
        <end position="392"/>
    </location>
</feature>
<feature type="binding site" evidence="1">
    <location>
        <position position="221"/>
    </location>
    <ligand>
        <name>substrate</name>
    </ligand>
</feature>
<feature type="binding site" evidence="1">
    <location>
        <position position="250"/>
    </location>
    <ligand>
        <name>substrate</name>
    </ligand>
</feature>
<feature type="binding site" evidence="1">
    <location>
        <position position="388"/>
    </location>
    <ligand>
        <name>substrate</name>
    </ligand>
</feature>
<sequence length="392" mass="42058">MLRAGCRAALARRHLSSAPEGLKQTPLDALHRARGGRMVPFAGWSLPVQYGRGHLESHLHTRRHCSLFDVSHMLQTRVYGRDRVRFLESLVVGDIAELRPGQGTLTLLTNERGDIVDDLIVTNTAEDHLYVVSNAGCADKDRAVMEGRAAELRAAGGDVHLEVSGQRAAGVQGPSMAQVLQAGLPDDLTKLTFMTSTATTVFGVPGCRVTRCGYTGEDGVEISVPAGRAVELAERLLGCPEVWPAGLAARDSLRLEAGLCLYGNDIDESTTPVEAGLLWTLGKRRRTAMDFPGAAIIMEQVKEKPKRKRVGLTSVGPPLRPPAAILGPEGTPVGTVTSGCPSPSLGKNIAMGYVQAAHSRPGTTLTVEVRKKQHPALVTKMPFVPTHYYMAK</sequence>
<proteinExistence type="evidence at protein level"/>
<evidence type="ECO:0000250" key="1">
    <source>
        <dbReference type="UniProtKB" id="P48728"/>
    </source>
</evidence>
<evidence type="ECO:0000269" key="2">
    <source>
    </source>
</evidence>
<evidence type="ECO:0000303" key="3">
    <source>
    </source>
</evidence>
<evidence type="ECO:0000305" key="4"/>
<evidence type="ECO:0000305" key="5">
    <source>
    </source>
</evidence>
<accession>P28337</accession>
<organism>
    <name type="scientific">Gallus gallus</name>
    <name type="common">Chicken</name>
    <dbReference type="NCBI Taxonomy" id="9031"/>
    <lineage>
        <taxon>Eukaryota</taxon>
        <taxon>Metazoa</taxon>
        <taxon>Chordata</taxon>
        <taxon>Craniata</taxon>
        <taxon>Vertebrata</taxon>
        <taxon>Euteleostomi</taxon>
        <taxon>Archelosauria</taxon>
        <taxon>Archosauria</taxon>
        <taxon>Dinosauria</taxon>
        <taxon>Saurischia</taxon>
        <taxon>Theropoda</taxon>
        <taxon>Coelurosauria</taxon>
        <taxon>Aves</taxon>
        <taxon>Neognathae</taxon>
        <taxon>Galloanserae</taxon>
        <taxon>Galliformes</taxon>
        <taxon>Phasianidae</taxon>
        <taxon>Phasianinae</taxon>
        <taxon>Gallus</taxon>
    </lineage>
</organism>